<name>ERA_CLONN</name>
<gene>
    <name evidence="1" type="primary">era</name>
    <name type="ordered locus">NT01CX_0043</name>
</gene>
<sequence>MFKSGFISIIGRPNVGKSTLTNEILGEKLSIVSCRPQTTRNNIRAVLTRDDYQLVFLDTPGIHKPRHKLGEYMVKAAETSTDEVDLIVFITTPEGEISKGDELILEGLKNSKKPVFLVINKIDENPQELVAKTLKQYSEYMDFAEIIPISARKSKNVDTLLELMIKYMPEGPKYYPEDMITDVQERFVVSEIIREKALKLLSEEVPHGIAVEIISMKQSKRGTYHIDANLLCEKDSHKGIIIGKGGQKLKTISTYARQDIEKFLDAKVNLKVWVKVKKEWRDSNFMLKELGYKE</sequence>
<evidence type="ECO:0000255" key="1">
    <source>
        <dbReference type="HAMAP-Rule" id="MF_00367"/>
    </source>
</evidence>
<evidence type="ECO:0000255" key="2">
    <source>
        <dbReference type="PROSITE-ProRule" id="PRU01050"/>
    </source>
</evidence>
<dbReference type="EMBL" id="CP000382">
    <property type="protein sequence ID" value="ABK62249.1"/>
    <property type="molecule type" value="Genomic_DNA"/>
</dbReference>
<dbReference type="RefSeq" id="WP_011722545.1">
    <property type="nucleotide sequence ID" value="NC_008593.1"/>
</dbReference>
<dbReference type="SMR" id="A0Q1Q0"/>
<dbReference type="STRING" id="386415.NT01CX_0043"/>
<dbReference type="KEGG" id="cno:NT01CX_0043"/>
<dbReference type="eggNOG" id="COG1159">
    <property type="taxonomic scope" value="Bacteria"/>
</dbReference>
<dbReference type="HOGENOM" id="CLU_038009_1_0_9"/>
<dbReference type="Proteomes" id="UP000008220">
    <property type="component" value="Chromosome"/>
</dbReference>
<dbReference type="GO" id="GO:0005829">
    <property type="term" value="C:cytosol"/>
    <property type="evidence" value="ECO:0007669"/>
    <property type="project" value="TreeGrafter"/>
</dbReference>
<dbReference type="GO" id="GO:0005886">
    <property type="term" value="C:plasma membrane"/>
    <property type="evidence" value="ECO:0007669"/>
    <property type="project" value="UniProtKB-SubCell"/>
</dbReference>
<dbReference type="GO" id="GO:0005525">
    <property type="term" value="F:GTP binding"/>
    <property type="evidence" value="ECO:0007669"/>
    <property type="project" value="UniProtKB-UniRule"/>
</dbReference>
<dbReference type="GO" id="GO:0003924">
    <property type="term" value="F:GTPase activity"/>
    <property type="evidence" value="ECO:0007669"/>
    <property type="project" value="UniProtKB-UniRule"/>
</dbReference>
<dbReference type="GO" id="GO:0043024">
    <property type="term" value="F:ribosomal small subunit binding"/>
    <property type="evidence" value="ECO:0007669"/>
    <property type="project" value="TreeGrafter"/>
</dbReference>
<dbReference type="GO" id="GO:0070181">
    <property type="term" value="F:small ribosomal subunit rRNA binding"/>
    <property type="evidence" value="ECO:0007669"/>
    <property type="project" value="UniProtKB-UniRule"/>
</dbReference>
<dbReference type="GO" id="GO:0000028">
    <property type="term" value="P:ribosomal small subunit assembly"/>
    <property type="evidence" value="ECO:0007669"/>
    <property type="project" value="TreeGrafter"/>
</dbReference>
<dbReference type="CDD" id="cd04163">
    <property type="entry name" value="Era"/>
    <property type="match status" value="1"/>
</dbReference>
<dbReference type="CDD" id="cd22534">
    <property type="entry name" value="KH-II_Era"/>
    <property type="match status" value="1"/>
</dbReference>
<dbReference type="FunFam" id="3.30.300.20:FF:000003">
    <property type="entry name" value="GTPase Era"/>
    <property type="match status" value="1"/>
</dbReference>
<dbReference type="FunFam" id="3.40.50.300:FF:000094">
    <property type="entry name" value="GTPase Era"/>
    <property type="match status" value="1"/>
</dbReference>
<dbReference type="Gene3D" id="3.30.300.20">
    <property type="match status" value="1"/>
</dbReference>
<dbReference type="Gene3D" id="3.40.50.300">
    <property type="entry name" value="P-loop containing nucleotide triphosphate hydrolases"/>
    <property type="match status" value="1"/>
</dbReference>
<dbReference type="HAMAP" id="MF_00367">
    <property type="entry name" value="GTPase_Era"/>
    <property type="match status" value="1"/>
</dbReference>
<dbReference type="InterPro" id="IPR030388">
    <property type="entry name" value="G_ERA_dom"/>
</dbReference>
<dbReference type="InterPro" id="IPR006073">
    <property type="entry name" value="GTP-bd"/>
</dbReference>
<dbReference type="InterPro" id="IPR005662">
    <property type="entry name" value="GTPase_Era-like"/>
</dbReference>
<dbReference type="InterPro" id="IPR015946">
    <property type="entry name" value="KH_dom-like_a/b"/>
</dbReference>
<dbReference type="InterPro" id="IPR004044">
    <property type="entry name" value="KH_dom_type_2"/>
</dbReference>
<dbReference type="InterPro" id="IPR009019">
    <property type="entry name" value="KH_sf_prok-type"/>
</dbReference>
<dbReference type="InterPro" id="IPR027417">
    <property type="entry name" value="P-loop_NTPase"/>
</dbReference>
<dbReference type="InterPro" id="IPR005225">
    <property type="entry name" value="Small_GTP-bd"/>
</dbReference>
<dbReference type="NCBIfam" id="TIGR00436">
    <property type="entry name" value="era"/>
    <property type="match status" value="1"/>
</dbReference>
<dbReference type="NCBIfam" id="NF000908">
    <property type="entry name" value="PRK00089.1"/>
    <property type="match status" value="1"/>
</dbReference>
<dbReference type="NCBIfam" id="TIGR00231">
    <property type="entry name" value="small_GTP"/>
    <property type="match status" value="1"/>
</dbReference>
<dbReference type="PANTHER" id="PTHR42698">
    <property type="entry name" value="GTPASE ERA"/>
    <property type="match status" value="1"/>
</dbReference>
<dbReference type="PANTHER" id="PTHR42698:SF1">
    <property type="entry name" value="GTPASE ERA, MITOCHONDRIAL"/>
    <property type="match status" value="1"/>
</dbReference>
<dbReference type="Pfam" id="PF07650">
    <property type="entry name" value="KH_2"/>
    <property type="match status" value="1"/>
</dbReference>
<dbReference type="Pfam" id="PF01926">
    <property type="entry name" value="MMR_HSR1"/>
    <property type="match status" value="1"/>
</dbReference>
<dbReference type="SUPFAM" id="SSF52540">
    <property type="entry name" value="P-loop containing nucleoside triphosphate hydrolases"/>
    <property type="match status" value="1"/>
</dbReference>
<dbReference type="SUPFAM" id="SSF54814">
    <property type="entry name" value="Prokaryotic type KH domain (KH-domain type II)"/>
    <property type="match status" value="1"/>
</dbReference>
<dbReference type="PROSITE" id="PS51713">
    <property type="entry name" value="G_ERA"/>
    <property type="match status" value="1"/>
</dbReference>
<dbReference type="PROSITE" id="PS50823">
    <property type="entry name" value="KH_TYPE_2"/>
    <property type="match status" value="1"/>
</dbReference>
<comment type="function">
    <text evidence="1">An essential GTPase that binds both GDP and GTP, with rapid nucleotide exchange. Plays a role in 16S rRNA processing and 30S ribosomal subunit biogenesis and possibly also in cell cycle regulation and energy metabolism.</text>
</comment>
<comment type="subunit">
    <text evidence="1">Monomer.</text>
</comment>
<comment type="subcellular location">
    <subcellularLocation>
        <location>Cytoplasm</location>
    </subcellularLocation>
    <subcellularLocation>
        <location evidence="1">Cell membrane</location>
        <topology evidence="1">Peripheral membrane protein</topology>
    </subcellularLocation>
</comment>
<comment type="similarity">
    <text evidence="1 2">Belongs to the TRAFAC class TrmE-Era-EngA-EngB-Septin-like GTPase superfamily. Era GTPase family.</text>
</comment>
<feature type="chain" id="PRO_1000079675" description="GTPase Era">
    <location>
        <begin position="1"/>
        <end position="294"/>
    </location>
</feature>
<feature type="domain" description="Era-type G" evidence="2">
    <location>
        <begin position="3"/>
        <end position="170"/>
    </location>
</feature>
<feature type="domain" description="KH type-2" evidence="1">
    <location>
        <begin position="201"/>
        <end position="278"/>
    </location>
</feature>
<feature type="region of interest" description="G1" evidence="2">
    <location>
        <begin position="11"/>
        <end position="18"/>
    </location>
</feature>
<feature type="region of interest" description="G2" evidence="2">
    <location>
        <begin position="37"/>
        <end position="41"/>
    </location>
</feature>
<feature type="region of interest" description="G3" evidence="2">
    <location>
        <begin position="58"/>
        <end position="61"/>
    </location>
</feature>
<feature type="region of interest" description="G4" evidence="2">
    <location>
        <begin position="120"/>
        <end position="123"/>
    </location>
</feature>
<feature type="region of interest" description="G5" evidence="2">
    <location>
        <begin position="149"/>
        <end position="151"/>
    </location>
</feature>
<feature type="binding site" evidence="1">
    <location>
        <begin position="11"/>
        <end position="18"/>
    </location>
    <ligand>
        <name>GTP</name>
        <dbReference type="ChEBI" id="CHEBI:37565"/>
    </ligand>
</feature>
<feature type="binding site" evidence="1">
    <location>
        <begin position="58"/>
        <end position="62"/>
    </location>
    <ligand>
        <name>GTP</name>
        <dbReference type="ChEBI" id="CHEBI:37565"/>
    </ligand>
</feature>
<feature type="binding site" evidence="1">
    <location>
        <begin position="120"/>
        <end position="123"/>
    </location>
    <ligand>
        <name>GTP</name>
        <dbReference type="ChEBI" id="CHEBI:37565"/>
    </ligand>
</feature>
<reference key="1">
    <citation type="journal article" date="2006" name="Nat. Biotechnol.">
        <title>The genome and transcriptomes of the anti-tumor agent Clostridium novyi-NT.</title>
        <authorList>
            <person name="Bettegowda C."/>
            <person name="Huang X."/>
            <person name="Lin J."/>
            <person name="Cheong I."/>
            <person name="Kohli M."/>
            <person name="Szabo S.A."/>
            <person name="Zhang X."/>
            <person name="Diaz L.A. Jr."/>
            <person name="Velculescu V.E."/>
            <person name="Parmigiani G."/>
            <person name="Kinzler K.W."/>
            <person name="Vogelstein B."/>
            <person name="Zhou S."/>
        </authorList>
    </citation>
    <scope>NUCLEOTIDE SEQUENCE [LARGE SCALE GENOMIC DNA]</scope>
    <source>
        <strain>NT</strain>
    </source>
</reference>
<organism>
    <name type="scientific">Clostridium novyi (strain NT)</name>
    <dbReference type="NCBI Taxonomy" id="386415"/>
    <lineage>
        <taxon>Bacteria</taxon>
        <taxon>Bacillati</taxon>
        <taxon>Bacillota</taxon>
        <taxon>Clostridia</taxon>
        <taxon>Eubacteriales</taxon>
        <taxon>Clostridiaceae</taxon>
        <taxon>Clostridium</taxon>
    </lineage>
</organism>
<proteinExistence type="inferred from homology"/>
<accession>A0Q1Q0</accession>
<keyword id="KW-1003">Cell membrane</keyword>
<keyword id="KW-0963">Cytoplasm</keyword>
<keyword id="KW-0342">GTP-binding</keyword>
<keyword id="KW-0472">Membrane</keyword>
<keyword id="KW-0547">Nucleotide-binding</keyword>
<keyword id="KW-1185">Reference proteome</keyword>
<keyword id="KW-0690">Ribosome biogenesis</keyword>
<keyword id="KW-0694">RNA-binding</keyword>
<keyword id="KW-0699">rRNA-binding</keyword>
<protein>
    <recommendedName>
        <fullName evidence="1">GTPase Era</fullName>
    </recommendedName>
</protein>